<dbReference type="EC" id="1.10.3.9" evidence="1"/>
<dbReference type="EMBL" id="DQ821119">
    <property type="protein sequence ID" value="ABG79576.1"/>
    <property type="molecule type" value="Genomic_DNA"/>
</dbReference>
<dbReference type="RefSeq" id="YP_001023677.1">
    <property type="nucleotide sequence ID" value="NC_008829.1"/>
</dbReference>
<dbReference type="SMR" id="A2T309"/>
<dbReference type="GeneID" id="4788204"/>
<dbReference type="GO" id="GO:0009535">
    <property type="term" value="C:chloroplast thylakoid membrane"/>
    <property type="evidence" value="ECO:0007669"/>
    <property type="project" value="UniProtKB-SubCell"/>
</dbReference>
<dbReference type="GO" id="GO:0009523">
    <property type="term" value="C:photosystem II"/>
    <property type="evidence" value="ECO:0007669"/>
    <property type="project" value="UniProtKB-KW"/>
</dbReference>
<dbReference type="GO" id="GO:0016168">
    <property type="term" value="F:chlorophyll binding"/>
    <property type="evidence" value="ECO:0007669"/>
    <property type="project" value="UniProtKB-UniRule"/>
</dbReference>
<dbReference type="GO" id="GO:0045156">
    <property type="term" value="F:electron transporter, transferring electrons within the cyclic electron transport pathway of photosynthesis activity"/>
    <property type="evidence" value="ECO:0007669"/>
    <property type="project" value="InterPro"/>
</dbReference>
<dbReference type="GO" id="GO:0005506">
    <property type="term" value="F:iron ion binding"/>
    <property type="evidence" value="ECO:0007669"/>
    <property type="project" value="UniProtKB-UniRule"/>
</dbReference>
<dbReference type="GO" id="GO:0016682">
    <property type="term" value="F:oxidoreductase activity, acting on diphenols and related substances as donors, oxygen as acceptor"/>
    <property type="evidence" value="ECO:0007669"/>
    <property type="project" value="UniProtKB-UniRule"/>
</dbReference>
<dbReference type="GO" id="GO:0010242">
    <property type="term" value="F:oxygen evolving activity"/>
    <property type="evidence" value="ECO:0007669"/>
    <property type="project" value="UniProtKB-EC"/>
</dbReference>
<dbReference type="GO" id="GO:0009772">
    <property type="term" value="P:photosynthetic electron transport in photosystem II"/>
    <property type="evidence" value="ECO:0007669"/>
    <property type="project" value="InterPro"/>
</dbReference>
<dbReference type="GO" id="GO:0009635">
    <property type="term" value="P:response to herbicide"/>
    <property type="evidence" value="ECO:0007669"/>
    <property type="project" value="UniProtKB-KW"/>
</dbReference>
<dbReference type="CDD" id="cd09289">
    <property type="entry name" value="Photosystem-II_D1"/>
    <property type="match status" value="1"/>
</dbReference>
<dbReference type="FunFam" id="1.20.85.10:FF:000002">
    <property type="entry name" value="Photosystem II protein D1"/>
    <property type="match status" value="1"/>
</dbReference>
<dbReference type="Gene3D" id="1.20.85.10">
    <property type="entry name" value="Photosystem II protein D1-like"/>
    <property type="match status" value="1"/>
</dbReference>
<dbReference type="HAMAP" id="MF_01379">
    <property type="entry name" value="PSII_PsbA_D1"/>
    <property type="match status" value="1"/>
</dbReference>
<dbReference type="InterPro" id="IPR055266">
    <property type="entry name" value="D1/D2"/>
</dbReference>
<dbReference type="InterPro" id="IPR036854">
    <property type="entry name" value="Photo_II_D1/D2_sf"/>
</dbReference>
<dbReference type="InterPro" id="IPR000484">
    <property type="entry name" value="Photo_RC_L/M"/>
</dbReference>
<dbReference type="InterPro" id="IPR055265">
    <property type="entry name" value="Photo_RC_L/M_CS"/>
</dbReference>
<dbReference type="InterPro" id="IPR005867">
    <property type="entry name" value="PSII_D1"/>
</dbReference>
<dbReference type="NCBIfam" id="TIGR01151">
    <property type="entry name" value="psbA"/>
    <property type="match status" value="1"/>
</dbReference>
<dbReference type="PANTHER" id="PTHR33149:SF12">
    <property type="entry name" value="PHOTOSYSTEM II D2 PROTEIN"/>
    <property type="match status" value="1"/>
</dbReference>
<dbReference type="PANTHER" id="PTHR33149">
    <property type="entry name" value="PHOTOSYSTEM II PROTEIN D1"/>
    <property type="match status" value="1"/>
</dbReference>
<dbReference type="Pfam" id="PF00124">
    <property type="entry name" value="Photo_RC"/>
    <property type="match status" value="1"/>
</dbReference>
<dbReference type="PRINTS" id="PR00256">
    <property type="entry name" value="REACTNCENTRE"/>
</dbReference>
<dbReference type="SUPFAM" id="SSF81483">
    <property type="entry name" value="Bacterial photosystem II reaction centre, L and M subunits"/>
    <property type="match status" value="1"/>
</dbReference>
<dbReference type="PROSITE" id="PS00244">
    <property type="entry name" value="REACTION_CENTER"/>
    <property type="match status" value="1"/>
</dbReference>
<keyword id="KW-0007">Acetylation</keyword>
<keyword id="KW-0106">Calcium</keyword>
<keyword id="KW-0148">Chlorophyll</keyword>
<keyword id="KW-0150">Chloroplast</keyword>
<keyword id="KW-0157">Chromophore</keyword>
<keyword id="KW-0249">Electron transport</keyword>
<keyword id="KW-0359">Herbicide resistance</keyword>
<keyword id="KW-0408">Iron</keyword>
<keyword id="KW-0460">Magnesium</keyword>
<keyword id="KW-0464">Manganese</keyword>
<keyword id="KW-0472">Membrane</keyword>
<keyword id="KW-0479">Metal-binding</keyword>
<keyword id="KW-0560">Oxidoreductase</keyword>
<keyword id="KW-0597">Phosphoprotein</keyword>
<keyword id="KW-0602">Photosynthesis</keyword>
<keyword id="KW-0604">Photosystem II</keyword>
<keyword id="KW-0934">Plastid</keyword>
<keyword id="KW-0793">Thylakoid</keyword>
<keyword id="KW-0812">Transmembrane</keyword>
<keyword id="KW-1133">Transmembrane helix</keyword>
<keyword id="KW-0813">Transport</keyword>
<proteinExistence type="inferred from homology"/>
<reference key="1">
    <citation type="journal article" date="2007" name="Am. Fern J.">
        <title>The complete plastid genome sequence of Angiopteris evecta (G. Forst.) Hoffm. (Marattiaceae).</title>
        <authorList>
            <person name="Roper J.M."/>
            <person name="Hansen S.K."/>
            <person name="Wolf P.G."/>
            <person name="Karol K.G."/>
            <person name="Mandoli D.F."/>
            <person name="Everett K.D.E."/>
            <person name="Kuehl J.V."/>
            <person name="Boore J.L."/>
        </authorList>
    </citation>
    <scope>NUCLEOTIDE SEQUENCE [LARGE SCALE GENOMIC DNA]</scope>
</reference>
<protein>
    <recommendedName>
        <fullName evidence="1">Photosystem II protein D1</fullName>
        <shortName evidence="1">PSII D1 protein</shortName>
        <ecNumber evidence="1">1.10.3.9</ecNumber>
    </recommendedName>
    <alternativeName>
        <fullName evidence="1">Photosystem II Q(B) protein</fullName>
    </alternativeName>
</protein>
<name>PSBA_ANGEV</name>
<evidence type="ECO:0000255" key="1">
    <source>
        <dbReference type="HAMAP-Rule" id="MF_01379"/>
    </source>
</evidence>
<accession>A2T309</accession>
<comment type="function">
    <text evidence="1">Photosystem II (PSII) is a light-driven water:plastoquinone oxidoreductase that uses light energy to abstract electrons from H(2)O, generating O(2) and a proton gradient subsequently used for ATP formation. It consists of a core antenna complex that captures photons, and an electron transfer chain that converts photonic excitation into a charge separation. The D1/D2 (PsbA/PsbD) reaction center heterodimer binds P680, the primary electron donor of PSII as well as several subsequent electron acceptors.</text>
</comment>
<comment type="catalytic activity">
    <reaction evidence="1">
        <text>2 a plastoquinone + 4 hnu + 2 H2O = 2 a plastoquinol + O2</text>
        <dbReference type="Rhea" id="RHEA:36359"/>
        <dbReference type="Rhea" id="RHEA-COMP:9561"/>
        <dbReference type="Rhea" id="RHEA-COMP:9562"/>
        <dbReference type="ChEBI" id="CHEBI:15377"/>
        <dbReference type="ChEBI" id="CHEBI:15379"/>
        <dbReference type="ChEBI" id="CHEBI:17757"/>
        <dbReference type="ChEBI" id="CHEBI:30212"/>
        <dbReference type="ChEBI" id="CHEBI:62192"/>
        <dbReference type="EC" id="1.10.3.9"/>
    </reaction>
</comment>
<comment type="cofactor">
    <text evidence="1">The D1/D2 heterodimer binds P680, chlorophylls that are the primary electron donor of PSII, and subsequent electron acceptors. It shares a non-heme iron and each subunit binds pheophytin, quinone, additional chlorophylls, carotenoids and lipids. D1 provides most of the ligands for the Mn4-Ca-O5 cluster of the oxygen-evolving complex (OEC). There is also a Cl(-1) ion associated with D1 and D2, which is required for oxygen evolution. The PSII complex binds additional chlorophylls, carotenoids and specific lipids.</text>
</comment>
<comment type="subunit">
    <text evidence="1">PSII is composed of 1 copy each of membrane proteins PsbA, PsbB, PsbC, PsbD, PsbE, PsbF, PsbH, PsbI, PsbJ, PsbK, PsbL, PsbM, PsbT, PsbX, PsbY, PsbZ, Psb30/Ycf12, at least 3 peripheral proteins of the oxygen-evolving complex and a large number of cofactors. It forms dimeric complexes.</text>
</comment>
<comment type="subcellular location">
    <subcellularLocation>
        <location evidence="1">Plastid</location>
        <location evidence="1">Chloroplast thylakoid membrane</location>
        <topology evidence="1">Multi-pass membrane protein</topology>
    </subcellularLocation>
</comment>
<comment type="PTM">
    <text evidence="1">Tyr-161 forms a radical intermediate that is referred to as redox-active TyrZ, YZ or Y-Z.</text>
</comment>
<comment type="PTM">
    <text evidence="1">C-terminally processed by CTPA; processing is essential to allow assembly of the oxygen-evolving complex and thus photosynthetic growth.</text>
</comment>
<comment type="miscellaneous">
    <text evidence="1">2 of the reaction center chlorophylls (ChlD1 and ChlD2) are entirely coordinated by water.</text>
</comment>
<comment type="miscellaneous">
    <text evidence="1">Herbicides such as atrazine, BNT, diuron or ioxynil bind in the Q(B) binding site and block subsequent electron transfer.</text>
</comment>
<comment type="similarity">
    <text evidence="1">Belongs to the reaction center PufL/M/PsbA/D family.</text>
</comment>
<feature type="initiator methionine" description="Removed" evidence="1">
    <location>
        <position position="1"/>
    </location>
</feature>
<feature type="chain" id="PRO_0000339946" description="Photosystem II protein D1" evidence="1">
    <location>
        <begin position="2"/>
        <end position="344"/>
    </location>
</feature>
<feature type="propeptide" id="PRO_0000339947" evidence="1">
    <location>
        <begin position="345"/>
        <end position="353"/>
    </location>
</feature>
<feature type="transmembrane region" description="Helical" evidence="1">
    <location>
        <begin position="29"/>
        <end position="46"/>
    </location>
</feature>
<feature type="transmembrane region" description="Helical" evidence="1">
    <location>
        <begin position="118"/>
        <end position="133"/>
    </location>
</feature>
<feature type="transmembrane region" description="Helical" evidence="1">
    <location>
        <begin position="142"/>
        <end position="156"/>
    </location>
</feature>
<feature type="transmembrane region" description="Helical" evidence="1">
    <location>
        <begin position="197"/>
        <end position="218"/>
    </location>
</feature>
<feature type="transmembrane region" description="Helical" evidence="1">
    <location>
        <begin position="274"/>
        <end position="288"/>
    </location>
</feature>
<feature type="binding site" description="axial binding residue" evidence="1">
    <location>
        <position position="118"/>
    </location>
    <ligand>
        <name>chlorophyll a</name>
        <dbReference type="ChEBI" id="CHEBI:58416"/>
        <label>ChlzD1</label>
    </ligand>
    <ligandPart>
        <name>Mg</name>
        <dbReference type="ChEBI" id="CHEBI:25107"/>
    </ligandPart>
</feature>
<feature type="binding site" evidence="1">
    <location>
        <position position="126"/>
    </location>
    <ligand>
        <name>pheophytin a</name>
        <dbReference type="ChEBI" id="CHEBI:136840"/>
        <label>D1</label>
    </ligand>
</feature>
<feature type="binding site" evidence="1">
    <location>
        <position position="170"/>
    </location>
    <ligand>
        <name>[CaMn4O5] cluster</name>
        <dbReference type="ChEBI" id="CHEBI:189552"/>
    </ligand>
</feature>
<feature type="binding site" evidence="1">
    <location>
        <position position="189"/>
    </location>
    <ligand>
        <name>[CaMn4O5] cluster</name>
        <dbReference type="ChEBI" id="CHEBI:189552"/>
    </ligand>
</feature>
<feature type="binding site" description="axial binding residue" evidence="1">
    <location>
        <position position="198"/>
    </location>
    <ligand>
        <name>chlorophyll a</name>
        <dbReference type="ChEBI" id="CHEBI:58416"/>
        <label>PD1</label>
    </ligand>
    <ligandPart>
        <name>Mg</name>
        <dbReference type="ChEBI" id="CHEBI:25107"/>
    </ligandPart>
</feature>
<feature type="binding site" evidence="1">
    <location>
        <position position="215"/>
    </location>
    <ligand>
        <name>a quinone</name>
        <dbReference type="ChEBI" id="CHEBI:132124"/>
        <label>B</label>
    </ligand>
</feature>
<feature type="binding site" evidence="1">
    <location>
        <position position="215"/>
    </location>
    <ligand>
        <name>Fe cation</name>
        <dbReference type="ChEBI" id="CHEBI:24875"/>
        <note>ligand shared with heterodimeric partner</note>
    </ligand>
</feature>
<feature type="binding site" evidence="1">
    <location>
        <begin position="264"/>
        <end position="265"/>
    </location>
    <ligand>
        <name>a quinone</name>
        <dbReference type="ChEBI" id="CHEBI:132124"/>
        <label>B</label>
    </ligand>
</feature>
<feature type="binding site" evidence="1">
    <location>
        <position position="272"/>
    </location>
    <ligand>
        <name>Fe cation</name>
        <dbReference type="ChEBI" id="CHEBI:24875"/>
        <note>ligand shared with heterodimeric partner</note>
    </ligand>
</feature>
<feature type="binding site" evidence="1">
    <location>
        <position position="332"/>
    </location>
    <ligand>
        <name>[CaMn4O5] cluster</name>
        <dbReference type="ChEBI" id="CHEBI:189552"/>
    </ligand>
</feature>
<feature type="binding site" evidence="1">
    <location>
        <position position="333"/>
    </location>
    <ligand>
        <name>[CaMn4O5] cluster</name>
        <dbReference type="ChEBI" id="CHEBI:189552"/>
    </ligand>
</feature>
<feature type="binding site" evidence="1">
    <location>
        <position position="342"/>
    </location>
    <ligand>
        <name>[CaMn4O5] cluster</name>
        <dbReference type="ChEBI" id="CHEBI:189552"/>
    </ligand>
</feature>
<feature type="binding site" evidence="1">
    <location>
        <position position="344"/>
    </location>
    <ligand>
        <name>[CaMn4O5] cluster</name>
        <dbReference type="ChEBI" id="CHEBI:189552"/>
    </ligand>
</feature>
<feature type="site" description="Tyrosine radical intermediate" evidence="1">
    <location>
        <position position="161"/>
    </location>
</feature>
<feature type="site" description="Stabilizes free radical intermediate" evidence="1">
    <location>
        <position position="190"/>
    </location>
</feature>
<feature type="site" description="Cleavage; by CTPA" evidence="1">
    <location>
        <begin position="344"/>
        <end position="345"/>
    </location>
</feature>
<feature type="modified residue" description="N-acetylthreonine" evidence="1">
    <location>
        <position position="2"/>
    </location>
</feature>
<feature type="modified residue" description="Phosphothreonine" evidence="1">
    <location>
        <position position="2"/>
    </location>
</feature>
<sequence length="353" mass="38779">MTASLERRESASLWGRFCDWITSTENRLYIGWFGVLMIPTLLTATSVFIIAFIAAPPVDIDGIREPVSGSLLYGNNIISGAIIPTSAAIGLHFYPIWEAASVDEWLYNGGPYELIVLHFLLGVACYMGREWELSFRLGMRPWIAVAYSAPVAAAAAVFLIYPIGQGSFSDGMPLGISGTFNFMIVFQAEHNILMHPFHMLGVAGVFGGSLFSAMHGSLVTSSLIRETTENESANAGYKFGQEEETYNIVAAHGYFGRLIFQYASFNNSRSLHFFLAAWPVVGIWFTALGISTMAFNLNGFNFNQSVVDSQGRVINTWADIINRANLGMEVMHERNAHNFPLDLASVEAPSVKA</sequence>
<organism>
    <name type="scientific">Angiopteris evecta</name>
    <name type="common">Mule's foot fern</name>
    <name type="synonym">Polypodium evectum</name>
    <dbReference type="NCBI Taxonomy" id="13825"/>
    <lineage>
        <taxon>Eukaryota</taxon>
        <taxon>Viridiplantae</taxon>
        <taxon>Streptophyta</taxon>
        <taxon>Embryophyta</taxon>
        <taxon>Tracheophyta</taxon>
        <taxon>Polypodiopsida</taxon>
        <taxon>Marattiidae</taxon>
        <taxon>Marattiales</taxon>
        <taxon>Marattiaceae</taxon>
        <taxon>Angiopteris</taxon>
    </lineage>
</organism>
<gene>
    <name evidence="1" type="primary">psbA</name>
</gene>
<geneLocation type="chloroplast"/>